<dbReference type="EC" id="2.7.4.25" evidence="1"/>
<dbReference type="EMBL" id="AM398681">
    <property type="protein sequence ID" value="CAL43779.1"/>
    <property type="molecule type" value="Genomic_DNA"/>
</dbReference>
<dbReference type="RefSeq" id="WP_011963822.1">
    <property type="nucleotide sequence ID" value="NC_009613.3"/>
</dbReference>
<dbReference type="RefSeq" id="YP_001296586.1">
    <property type="nucleotide sequence ID" value="NC_009613.3"/>
</dbReference>
<dbReference type="SMR" id="A6H0A6"/>
<dbReference type="STRING" id="402612.FP1712"/>
<dbReference type="EnsemblBacteria" id="CAL43779">
    <property type="protein sequence ID" value="CAL43779"/>
    <property type="gene ID" value="FP1712"/>
</dbReference>
<dbReference type="KEGG" id="fps:FP1712"/>
<dbReference type="PATRIC" id="fig|402612.5.peg.1728"/>
<dbReference type="eggNOG" id="COG0283">
    <property type="taxonomic scope" value="Bacteria"/>
</dbReference>
<dbReference type="HOGENOM" id="CLU_079959_0_2_10"/>
<dbReference type="OrthoDB" id="9807434at2"/>
<dbReference type="Proteomes" id="UP000006394">
    <property type="component" value="Chromosome"/>
</dbReference>
<dbReference type="GO" id="GO:0005829">
    <property type="term" value="C:cytosol"/>
    <property type="evidence" value="ECO:0007669"/>
    <property type="project" value="TreeGrafter"/>
</dbReference>
<dbReference type="GO" id="GO:0005524">
    <property type="term" value="F:ATP binding"/>
    <property type="evidence" value="ECO:0007669"/>
    <property type="project" value="UniProtKB-UniRule"/>
</dbReference>
<dbReference type="GO" id="GO:0036430">
    <property type="term" value="F:CMP kinase activity"/>
    <property type="evidence" value="ECO:0007669"/>
    <property type="project" value="RHEA"/>
</dbReference>
<dbReference type="GO" id="GO:0036431">
    <property type="term" value="F:dCMP kinase activity"/>
    <property type="evidence" value="ECO:0007669"/>
    <property type="project" value="RHEA"/>
</dbReference>
<dbReference type="GO" id="GO:0015949">
    <property type="term" value="P:nucleobase-containing small molecule interconversion"/>
    <property type="evidence" value="ECO:0007669"/>
    <property type="project" value="TreeGrafter"/>
</dbReference>
<dbReference type="GO" id="GO:0006220">
    <property type="term" value="P:pyrimidine nucleotide metabolic process"/>
    <property type="evidence" value="ECO:0007669"/>
    <property type="project" value="UniProtKB-UniRule"/>
</dbReference>
<dbReference type="CDD" id="cd02020">
    <property type="entry name" value="CMPK"/>
    <property type="match status" value="1"/>
</dbReference>
<dbReference type="Gene3D" id="3.40.50.300">
    <property type="entry name" value="P-loop containing nucleotide triphosphate hydrolases"/>
    <property type="match status" value="1"/>
</dbReference>
<dbReference type="HAMAP" id="MF_00238">
    <property type="entry name" value="Cytidyl_kinase_type1"/>
    <property type="match status" value="1"/>
</dbReference>
<dbReference type="InterPro" id="IPR003136">
    <property type="entry name" value="Cytidylate_kin"/>
</dbReference>
<dbReference type="InterPro" id="IPR011994">
    <property type="entry name" value="Cytidylate_kinase_dom"/>
</dbReference>
<dbReference type="InterPro" id="IPR027417">
    <property type="entry name" value="P-loop_NTPase"/>
</dbReference>
<dbReference type="NCBIfam" id="TIGR00017">
    <property type="entry name" value="cmk"/>
    <property type="match status" value="1"/>
</dbReference>
<dbReference type="PANTHER" id="PTHR21299:SF2">
    <property type="entry name" value="CYTIDYLATE KINASE"/>
    <property type="match status" value="1"/>
</dbReference>
<dbReference type="PANTHER" id="PTHR21299">
    <property type="entry name" value="CYTIDYLATE KINASE/PANTOATE-BETA-ALANINE LIGASE"/>
    <property type="match status" value="1"/>
</dbReference>
<dbReference type="Pfam" id="PF02224">
    <property type="entry name" value="Cytidylate_kin"/>
    <property type="match status" value="1"/>
</dbReference>
<dbReference type="SUPFAM" id="SSF52540">
    <property type="entry name" value="P-loop containing nucleoside triphosphate hydrolases"/>
    <property type="match status" value="1"/>
</dbReference>
<reference key="1">
    <citation type="journal article" date="2007" name="Nat. Biotechnol.">
        <title>Complete genome sequence of the fish pathogen Flavobacterium psychrophilum.</title>
        <authorList>
            <person name="Duchaud E."/>
            <person name="Boussaha M."/>
            <person name="Loux V."/>
            <person name="Bernardet J.-F."/>
            <person name="Michel C."/>
            <person name="Kerouault B."/>
            <person name="Mondot S."/>
            <person name="Nicolas P."/>
            <person name="Bossy R."/>
            <person name="Caron C."/>
            <person name="Bessieres P."/>
            <person name="Gibrat J.-F."/>
            <person name="Claverol S."/>
            <person name="Dumetz F."/>
            <person name="Le Henaff M."/>
            <person name="Benmansour A."/>
        </authorList>
    </citation>
    <scope>NUCLEOTIDE SEQUENCE [LARGE SCALE GENOMIC DNA]</scope>
    <source>
        <strain>ATCC 49511 / DSM 21280 / CIP 103535 / JIP02/86</strain>
    </source>
</reference>
<proteinExistence type="inferred from homology"/>
<comment type="catalytic activity">
    <reaction evidence="1">
        <text>CMP + ATP = CDP + ADP</text>
        <dbReference type="Rhea" id="RHEA:11600"/>
        <dbReference type="ChEBI" id="CHEBI:30616"/>
        <dbReference type="ChEBI" id="CHEBI:58069"/>
        <dbReference type="ChEBI" id="CHEBI:60377"/>
        <dbReference type="ChEBI" id="CHEBI:456216"/>
        <dbReference type="EC" id="2.7.4.25"/>
    </reaction>
</comment>
<comment type="catalytic activity">
    <reaction evidence="1">
        <text>dCMP + ATP = dCDP + ADP</text>
        <dbReference type="Rhea" id="RHEA:25094"/>
        <dbReference type="ChEBI" id="CHEBI:30616"/>
        <dbReference type="ChEBI" id="CHEBI:57566"/>
        <dbReference type="ChEBI" id="CHEBI:58593"/>
        <dbReference type="ChEBI" id="CHEBI:456216"/>
        <dbReference type="EC" id="2.7.4.25"/>
    </reaction>
</comment>
<comment type="subcellular location">
    <subcellularLocation>
        <location evidence="1">Cytoplasm</location>
    </subcellularLocation>
</comment>
<comment type="similarity">
    <text evidence="1">Belongs to the cytidylate kinase family. Type 1 subfamily.</text>
</comment>
<accession>A6H0A6</accession>
<evidence type="ECO:0000255" key="1">
    <source>
        <dbReference type="HAMAP-Rule" id="MF_00238"/>
    </source>
</evidence>
<protein>
    <recommendedName>
        <fullName evidence="1">Cytidylate kinase</fullName>
        <shortName evidence="1">CK</shortName>
        <ecNumber evidence="1">2.7.4.25</ecNumber>
    </recommendedName>
    <alternativeName>
        <fullName evidence="1">Cytidine monophosphate kinase</fullName>
        <shortName evidence="1">CMP kinase</shortName>
    </alternativeName>
</protein>
<name>KCY_FLAPJ</name>
<keyword id="KW-0067">ATP-binding</keyword>
<keyword id="KW-0963">Cytoplasm</keyword>
<keyword id="KW-0418">Kinase</keyword>
<keyword id="KW-0547">Nucleotide-binding</keyword>
<keyword id="KW-1185">Reference proteome</keyword>
<keyword id="KW-0808">Transferase</keyword>
<sequence length="226" mass="25783">MKKITIAIDGFSSTGKSTLAKQLANHLGYIFVDSGAMYRAITYYALQNEYINQDLFNKEKLIKNLPQIKLEFQFNPKLGFAEMYLNDANVEKEIRTIKVSNYVSQVAAISQVRAKLVEQQQQMGKNKGIVMDGRDIGTVVFPTAELKIFMTASAQTRAQRRYDEMSSNSENVSYDEVLKNVQERDFIDTHREDSPLVKANDAIEIDNSHLSREEQFKIVLDLVNNI</sequence>
<gene>
    <name evidence="1" type="primary">cmk</name>
    <name type="ordered locus">FP1712</name>
</gene>
<organism>
    <name type="scientific">Flavobacterium psychrophilum (strain ATCC 49511 / DSM 21280 / CIP 103535 / JIP02/86)</name>
    <dbReference type="NCBI Taxonomy" id="402612"/>
    <lineage>
        <taxon>Bacteria</taxon>
        <taxon>Pseudomonadati</taxon>
        <taxon>Bacteroidota</taxon>
        <taxon>Flavobacteriia</taxon>
        <taxon>Flavobacteriales</taxon>
        <taxon>Flavobacteriaceae</taxon>
        <taxon>Flavobacterium</taxon>
    </lineage>
</organism>
<feature type="chain" id="PRO_1000048220" description="Cytidylate kinase">
    <location>
        <begin position="1"/>
        <end position="226"/>
    </location>
</feature>
<feature type="binding site" evidence="1">
    <location>
        <begin position="10"/>
        <end position="18"/>
    </location>
    <ligand>
        <name>ATP</name>
        <dbReference type="ChEBI" id="CHEBI:30616"/>
    </ligand>
</feature>